<evidence type="ECO:0000255" key="1">
    <source>
        <dbReference type="HAMAP-Rule" id="MF_00051"/>
    </source>
</evidence>
<proteinExistence type="inferred from homology"/>
<gene>
    <name evidence="1" type="primary">glyA</name>
    <name type="ordered locus">NFA_48130</name>
</gene>
<sequence>MTQTTASVNTQSLGELDPELAAAMAGELARERDTLEMIASENFVPRAVLQAQGSVLTNKYAEGYPGRRYYGGCENVDVVENLARERAKELFGAEFANVQPHSGAQANAAVLMSLMDPGDRLLGLDLAHGGHLTHGMRLNFSGKLYEVHSYGVSKEDHRVDMDEVRTIALGAKPKVIVAGWSAYPRHQDFAAFRAIADEVGAYLWVDMAHFAGLVAAGLHPSPVPYADVVSSTVHKTLGGPRSGLILAKQEFAKKINSAVFPGQQGGPLMHAIAAKAVAFKIAGTEEFRDRQQRTLSGAKILAERLTGADVADKGISVLTGGTDVHLVLVDLRNSQLDGQQGEDLLHEIGITVNRNAVPFDPRPPMVTSGLRIGTAALATRGFGDAEFTEVADIIATALAGGSDAETLRGRVRALAQRVPLYQGLEDWHLLG</sequence>
<keyword id="KW-0028">Amino-acid biosynthesis</keyword>
<keyword id="KW-0963">Cytoplasm</keyword>
<keyword id="KW-0554">One-carbon metabolism</keyword>
<keyword id="KW-0663">Pyridoxal phosphate</keyword>
<keyword id="KW-1185">Reference proteome</keyword>
<keyword id="KW-0808">Transferase</keyword>
<dbReference type="EC" id="2.1.2.1" evidence="1"/>
<dbReference type="EMBL" id="AP006618">
    <property type="protein sequence ID" value="BAD59665.1"/>
    <property type="molecule type" value="Genomic_DNA"/>
</dbReference>
<dbReference type="RefSeq" id="WP_011211349.1">
    <property type="nucleotide sequence ID" value="NC_006361.1"/>
</dbReference>
<dbReference type="SMR" id="Q5YQ76"/>
<dbReference type="STRING" id="247156.NFA_48130"/>
<dbReference type="GeneID" id="61135410"/>
<dbReference type="KEGG" id="nfa:NFA_48130"/>
<dbReference type="eggNOG" id="COG0112">
    <property type="taxonomic scope" value="Bacteria"/>
</dbReference>
<dbReference type="HOGENOM" id="CLU_022477_2_1_11"/>
<dbReference type="OrthoDB" id="9803846at2"/>
<dbReference type="UniPathway" id="UPA00193"/>
<dbReference type="UniPathway" id="UPA00288">
    <property type="reaction ID" value="UER01023"/>
</dbReference>
<dbReference type="Proteomes" id="UP000006820">
    <property type="component" value="Chromosome"/>
</dbReference>
<dbReference type="GO" id="GO:0005829">
    <property type="term" value="C:cytosol"/>
    <property type="evidence" value="ECO:0007669"/>
    <property type="project" value="TreeGrafter"/>
</dbReference>
<dbReference type="GO" id="GO:0004372">
    <property type="term" value="F:glycine hydroxymethyltransferase activity"/>
    <property type="evidence" value="ECO:0007669"/>
    <property type="project" value="UniProtKB-UniRule"/>
</dbReference>
<dbReference type="GO" id="GO:0030170">
    <property type="term" value="F:pyridoxal phosphate binding"/>
    <property type="evidence" value="ECO:0007669"/>
    <property type="project" value="UniProtKB-UniRule"/>
</dbReference>
<dbReference type="GO" id="GO:0019264">
    <property type="term" value="P:glycine biosynthetic process from serine"/>
    <property type="evidence" value="ECO:0007669"/>
    <property type="project" value="UniProtKB-UniRule"/>
</dbReference>
<dbReference type="GO" id="GO:0035999">
    <property type="term" value="P:tetrahydrofolate interconversion"/>
    <property type="evidence" value="ECO:0007669"/>
    <property type="project" value="UniProtKB-UniRule"/>
</dbReference>
<dbReference type="CDD" id="cd00378">
    <property type="entry name" value="SHMT"/>
    <property type="match status" value="1"/>
</dbReference>
<dbReference type="FunFam" id="3.40.640.10:FF:000001">
    <property type="entry name" value="Serine hydroxymethyltransferase"/>
    <property type="match status" value="1"/>
</dbReference>
<dbReference type="Gene3D" id="3.90.1150.10">
    <property type="entry name" value="Aspartate Aminotransferase, domain 1"/>
    <property type="match status" value="1"/>
</dbReference>
<dbReference type="Gene3D" id="3.40.640.10">
    <property type="entry name" value="Type I PLP-dependent aspartate aminotransferase-like (Major domain)"/>
    <property type="match status" value="1"/>
</dbReference>
<dbReference type="HAMAP" id="MF_00051">
    <property type="entry name" value="SHMT"/>
    <property type="match status" value="1"/>
</dbReference>
<dbReference type="InterPro" id="IPR015424">
    <property type="entry name" value="PyrdxlP-dep_Trfase"/>
</dbReference>
<dbReference type="InterPro" id="IPR015421">
    <property type="entry name" value="PyrdxlP-dep_Trfase_major"/>
</dbReference>
<dbReference type="InterPro" id="IPR015422">
    <property type="entry name" value="PyrdxlP-dep_Trfase_small"/>
</dbReference>
<dbReference type="InterPro" id="IPR001085">
    <property type="entry name" value="Ser_HO-MeTrfase"/>
</dbReference>
<dbReference type="InterPro" id="IPR049943">
    <property type="entry name" value="Ser_HO-MeTrfase-like"/>
</dbReference>
<dbReference type="InterPro" id="IPR019798">
    <property type="entry name" value="Ser_HO-MeTrfase_PLP_BS"/>
</dbReference>
<dbReference type="InterPro" id="IPR039429">
    <property type="entry name" value="SHMT-like_dom"/>
</dbReference>
<dbReference type="NCBIfam" id="NF000586">
    <property type="entry name" value="PRK00011.1"/>
    <property type="match status" value="1"/>
</dbReference>
<dbReference type="PANTHER" id="PTHR11680">
    <property type="entry name" value="SERINE HYDROXYMETHYLTRANSFERASE"/>
    <property type="match status" value="1"/>
</dbReference>
<dbReference type="PANTHER" id="PTHR11680:SF35">
    <property type="entry name" value="SERINE HYDROXYMETHYLTRANSFERASE 1"/>
    <property type="match status" value="1"/>
</dbReference>
<dbReference type="Pfam" id="PF00464">
    <property type="entry name" value="SHMT"/>
    <property type="match status" value="1"/>
</dbReference>
<dbReference type="PIRSF" id="PIRSF000412">
    <property type="entry name" value="SHMT"/>
    <property type="match status" value="1"/>
</dbReference>
<dbReference type="SUPFAM" id="SSF53383">
    <property type="entry name" value="PLP-dependent transferases"/>
    <property type="match status" value="1"/>
</dbReference>
<dbReference type="PROSITE" id="PS00096">
    <property type="entry name" value="SHMT"/>
    <property type="match status" value="1"/>
</dbReference>
<reference key="1">
    <citation type="journal article" date="2004" name="Proc. Natl. Acad. Sci. U.S.A.">
        <title>The complete genomic sequence of Nocardia farcinica IFM 10152.</title>
        <authorList>
            <person name="Ishikawa J."/>
            <person name="Yamashita A."/>
            <person name="Mikami Y."/>
            <person name="Hoshino Y."/>
            <person name="Kurita H."/>
            <person name="Hotta K."/>
            <person name="Shiba T."/>
            <person name="Hattori M."/>
        </authorList>
    </citation>
    <scope>NUCLEOTIDE SEQUENCE [LARGE SCALE GENOMIC DNA]</scope>
    <source>
        <strain>IFM 10152</strain>
    </source>
</reference>
<feature type="chain" id="PRO_0000113626" description="Serine hydroxymethyltransferase">
    <location>
        <begin position="1"/>
        <end position="431"/>
    </location>
</feature>
<feature type="binding site" evidence="1">
    <location>
        <position position="126"/>
    </location>
    <ligand>
        <name>(6S)-5,6,7,8-tetrahydrofolate</name>
        <dbReference type="ChEBI" id="CHEBI:57453"/>
    </ligand>
</feature>
<feature type="binding site" evidence="1">
    <location>
        <begin position="130"/>
        <end position="132"/>
    </location>
    <ligand>
        <name>(6S)-5,6,7,8-tetrahydrofolate</name>
        <dbReference type="ChEBI" id="CHEBI:57453"/>
    </ligand>
</feature>
<feature type="site" description="Plays an important role in substrate specificity" evidence="1">
    <location>
        <position position="234"/>
    </location>
</feature>
<feature type="modified residue" description="N6-(pyridoxal phosphate)lysine" evidence="1">
    <location>
        <position position="235"/>
    </location>
</feature>
<organism>
    <name type="scientific">Nocardia farcinica (strain IFM 10152)</name>
    <dbReference type="NCBI Taxonomy" id="247156"/>
    <lineage>
        <taxon>Bacteria</taxon>
        <taxon>Bacillati</taxon>
        <taxon>Actinomycetota</taxon>
        <taxon>Actinomycetes</taxon>
        <taxon>Mycobacteriales</taxon>
        <taxon>Nocardiaceae</taxon>
        <taxon>Nocardia</taxon>
    </lineage>
</organism>
<protein>
    <recommendedName>
        <fullName evidence="1">Serine hydroxymethyltransferase</fullName>
        <shortName evidence="1">SHMT</shortName>
        <shortName evidence="1">Serine methylase</shortName>
        <ecNumber evidence="1">2.1.2.1</ecNumber>
    </recommendedName>
</protein>
<name>GLYA_NOCFA</name>
<accession>Q5YQ76</accession>
<comment type="function">
    <text evidence="1">Catalyzes the reversible interconversion of serine and glycine with tetrahydrofolate (THF) serving as the one-carbon carrier. This reaction serves as the major source of one-carbon groups required for the biosynthesis of purines, thymidylate, methionine, and other important biomolecules. Also exhibits THF-independent aldolase activity toward beta-hydroxyamino acids, producing glycine and aldehydes, via a retro-aldol mechanism.</text>
</comment>
<comment type="catalytic activity">
    <reaction evidence="1">
        <text>(6R)-5,10-methylene-5,6,7,8-tetrahydrofolate + glycine + H2O = (6S)-5,6,7,8-tetrahydrofolate + L-serine</text>
        <dbReference type="Rhea" id="RHEA:15481"/>
        <dbReference type="ChEBI" id="CHEBI:15377"/>
        <dbReference type="ChEBI" id="CHEBI:15636"/>
        <dbReference type="ChEBI" id="CHEBI:33384"/>
        <dbReference type="ChEBI" id="CHEBI:57305"/>
        <dbReference type="ChEBI" id="CHEBI:57453"/>
        <dbReference type="EC" id="2.1.2.1"/>
    </reaction>
</comment>
<comment type="cofactor">
    <cofactor evidence="1">
        <name>pyridoxal 5'-phosphate</name>
        <dbReference type="ChEBI" id="CHEBI:597326"/>
    </cofactor>
</comment>
<comment type="pathway">
    <text evidence="1">One-carbon metabolism; tetrahydrofolate interconversion.</text>
</comment>
<comment type="pathway">
    <text evidence="1">Amino-acid biosynthesis; glycine biosynthesis; glycine from L-serine: step 1/1.</text>
</comment>
<comment type="subunit">
    <text evidence="1">Homodimer.</text>
</comment>
<comment type="subcellular location">
    <subcellularLocation>
        <location evidence="1">Cytoplasm</location>
    </subcellularLocation>
</comment>
<comment type="similarity">
    <text evidence="1">Belongs to the SHMT family.</text>
</comment>